<organism>
    <name type="scientific">Ajellomyces capsulatus (strain NAm1 / WU24)</name>
    <name type="common">Darling's disease fungus</name>
    <name type="synonym">Histoplasma capsulatum</name>
    <dbReference type="NCBI Taxonomy" id="2059318"/>
    <lineage>
        <taxon>Eukaryota</taxon>
        <taxon>Fungi</taxon>
        <taxon>Dikarya</taxon>
        <taxon>Ascomycota</taxon>
        <taxon>Pezizomycotina</taxon>
        <taxon>Eurotiomycetes</taxon>
        <taxon>Eurotiomycetidae</taxon>
        <taxon>Onygenales</taxon>
        <taxon>Ajellomycetaceae</taxon>
        <taxon>Histoplasma</taxon>
    </lineage>
</organism>
<keyword id="KW-0001">2Fe-2S</keyword>
<keyword id="KW-0004">4Fe-4S</keyword>
<keyword id="KW-0963">Cytoplasm</keyword>
<keyword id="KW-0408">Iron</keyword>
<keyword id="KW-0411">Iron-sulfur</keyword>
<keyword id="KW-0479">Metal-binding</keyword>
<keyword id="KW-0496">Mitochondrion</keyword>
<keyword id="KW-1185">Reference proteome</keyword>
<feature type="chain" id="PRO_0000324854" description="Fe-S cluster assembly protein DRE2">
    <location>
        <begin position="1"/>
        <end position="351"/>
    </location>
</feature>
<feature type="region of interest" description="N-terminal SAM-like domain" evidence="1">
    <location>
        <begin position="1"/>
        <end position="151"/>
    </location>
</feature>
<feature type="region of interest" description="Disordered" evidence="2">
    <location>
        <begin position="93"/>
        <end position="118"/>
    </location>
</feature>
<feature type="region of interest" description="Linker" evidence="1">
    <location>
        <begin position="152"/>
        <end position="243"/>
    </location>
</feature>
<feature type="region of interest" description="Disordered" evidence="2">
    <location>
        <begin position="157"/>
        <end position="186"/>
    </location>
</feature>
<feature type="region of interest" description="Fe-S binding site A" evidence="1">
    <location>
        <begin position="253"/>
        <end position="269"/>
    </location>
</feature>
<feature type="region of interest" description="Fe-S binding site B" evidence="1">
    <location>
        <begin position="314"/>
        <end position="328"/>
    </location>
</feature>
<feature type="short sequence motif" description="Cx2C motif 1" evidence="1">
    <location>
        <begin position="314"/>
        <end position="317"/>
    </location>
</feature>
<feature type="short sequence motif" description="Cx2C motif 2" evidence="1">
    <location>
        <begin position="325"/>
        <end position="328"/>
    </location>
</feature>
<feature type="compositionally biased region" description="Polar residues" evidence="2">
    <location>
        <begin position="105"/>
        <end position="114"/>
    </location>
</feature>
<feature type="compositionally biased region" description="Polar residues" evidence="2">
    <location>
        <begin position="167"/>
        <end position="186"/>
    </location>
</feature>
<feature type="binding site" evidence="1">
    <location>
        <position position="253"/>
    </location>
    <ligand>
        <name>[2Fe-2S] cluster</name>
        <dbReference type="ChEBI" id="CHEBI:190135"/>
    </ligand>
</feature>
<feature type="binding site" evidence="1">
    <location>
        <position position="264"/>
    </location>
    <ligand>
        <name>[2Fe-2S] cluster</name>
        <dbReference type="ChEBI" id="CHEBI:190135"/>
    </ligand>
</feature>
<feature type="binding site" evidence="1">
    <location>
        <position position="267"/>
    </location>
    <ligand>
        <name>[2Fe-2S] cluster</name>
        <dbReference type="ChEBI" id="CHEBI:190135"/>
    </ligand>
</feature>
<feature type="binding site" evidence="1">
    <location>
        <position position="269"/>
    </location>
    <ligand>
        <name>[2Fe-2S] cluster</name>
        <dbReference type="ChEBI" id="CHEBI:190135"/>
    </ligand>
</feature>
<feature type="binding site" evidence="1">
    <location>
        <position position="314"/>
    </location>
    <ligand>
        <name>[4Fe-4S] cluster</name>
        <dbReference type="ChEBI" id="CHEBI:49883"/>
    </ligand>
</feature>
<feature type="binding site" evidence="1">
    <location>
        <position position="317"/>
    </location>
    <ligand>
        <name>[4Fe-4S] cluster</name>
        <dbReference type="ChEBI" id="CHEBI:49883"/>
    </ligand>
</feature>
<feature type="binding site" evidence="1">
    <location>
        <position position="325"/>
    </location>
    <ligand>
        <name>[4Fe-4S] cluster</name>
        <dbReference type="ChEBI" id="CHEBI:49883"/>
    </ligand>
</feature>
<feature type="binding site" evidence="1">
    <location>
        <position position="328"/>
    </location>
    <ligand>
        <name>[4Fe-4S] cluster</name>
        <dbReference type="ChEBI" id="CHEBI:49883"/>
    </ligand>
</feature>
<name>DRE2_AJECN</name>
<proteinExistence type="inferred from homology"/>
<dbReference type="EMBL" id="CH476655">
    <property type="protein sequence ID" value="EDN04156.1"/>
    <property type="molecule type" value="Genomic_DNA"/>
</dbReference>
<dbReference type="STRING" id="339724.A6QXB4"/>
<dbReference type="KEGG" id="aje:HCAG_02021"/>
<dbReference type="VEuPathDB" id="FungiDB:HCAG_02021"/>
<dbReference type="HOGENOM" id="CLU_067152_1_0_1"/>
<dbReference type="OMA" id="DFVMPVT"/>
<dbReference type="OrthoDB" id="12439at299071"/>
<dbReference type="Proteomes" id="UP000009297">
    <property type="component" value="Unassembled WGS sequence"/>
</dbReference>
<dbReference type="GO" id="GO:0005758">
    <property type="term" value="C:mitochondrial intermembrane space"/>
    <property type="evidence" value="ECO:0007669"/>
    <property type="project" value="UniProtKB-SubCell"/>
</dbReference>
<dbReference type="GO" id="GO:0051537">
    <property type="term" value="F:2 iron, 2 sulfur cluster binding"/>
    <property type="evidence" value="ECO:0007669"/>
    <property type="project" value="UniProtKB-UniRule"/>
</dbReference>
<dbReference type="GO" id="GO:0051539">
    <property type="term" value="F:4 iron, 4 sulfur cluster binding"/>
    <property type="evidence" value="ECO:0007669"/>
    <property type="project" value="UniProtKB-KW"/>
</dbReference>
<dbReference type="GO" id="GO:0009055">
    <property type="term" value="F:electron transfer activity"/>
    <property type="evidence" value="ECO:0007669"/>
    <property type="project" value="UniProtKB-UniRule"/>
</dbReference>
<dbReference type="GO" id="GO:0046872">
    <property type="term" value="F:metal ion binding"/>
    <property type="evidence" value="ECO:0007669"/>
    <property type="project" value="UniProtKB-KW"/>
</dbReference>
<dbReference type="GO" id="GO:0016226">
    <property type="term" value="P:iron-sulfur cluster assembly"/>
    <property type="evidence" value="ECO:0007669"/>
    <property type="project" value="UniProtKB-UniRule"/>
</dbReference>
<dbReference type="Gene3D" id="3.40.50.11000">
    <property type="entry name" value="Fe-S cluster assembly protein Dre2, N-terminal domain"/>
    <property type="match status" value="1"/>
</dbReference>
<dbReference type="HAMAP" id="MF_03115">
    <property type="entry name" value="Anamorsin"/>
    <property type="match status" value="1"/>
</dbReference>
<dbReference type="InterPro" id="IPR007785">
    <property type="entry name" value="Anamorsin"/>
</dbReference>
<dbReference type="InterPro" id="IPR046408">
    <property type="entry name" value="CIAPIN1"/>
</dbReference>
<dbReference type="InterPro" id="IPR031838">
    <property type="entry name" value="Dre2_N"/>
</dbReference>
<dbReference type="PANTHER" id="PTHR13273">
    <property type="entry name" value="ANAMORSIN"/>
    <property type="match status" value="1"/>
</dbReference>
<dbReference type="PANTHER" id="PTHR13273:SF14">
    <property type="entry name" value="ANAMORSIN"/>
    <property type="match status" value="1"/>
</dbReference>
<dbReference type="Pfam" id="PF05093">
    <property type="entry name" value="CIAPIN1"/>
    <property type="match status" value="1"/>
</dbReference>
<dbReference type="Pfam" id="PF16803">
    <property type="entry name" value="DRE2_N"/>
    <property type="match status" value="1"/>
</dbReference>
<sequence>MATTGRVLLLSPPSLSSHPEKLNAILKSHTRDKTDLQMLDRLAHGLVSLPESTYDIVLLLTGADNTLAETHSLLNRELIQRVVHSLRPAGKLRNRENKPWGLSDGNGSNANSSRRYNDDEQRFRNEVILAGLVFDDKGELLKPDIGAQQAIPLKLSRRRKEKEKTDTLASSANYSTNGTVGAPSSNGISAPIPAAKTTENNPVPPGVGFIDFSDDFGVPAEDDPQDSDEELIDEDELLDEDDMGRQIVQPPECRPKPGKRRRACKDCSCGLSQKLEAKDKAKRATADKALETMKLGSSELAEVDFTVQGKVGSCGNCSLGDAFRCDGCPYIGLPAFKPGEEVRLLNNDVQL</sequence>
<gene>
    <name evidence="1" type="primary">DRE2</name>
    <name type="ORF">HCAG_02021</name>
</gene>
<comment type="function">
    <text evidence="1">Component of the cytosolic iron-sulfur (Fe-S) protein assembly (CIA) machinery required for the maturation of extramitochondrial Fe-S proteins. Part of an electron transfer chain functioning in an early step of cytosolic Fe-S biogenesis, facilitating the de novo assembly of a [4Fe-4S] cluster on the scaffold complex CFD1-NBP35. Electrons are transferred to DRE2 from NADPH via the FAD- and FMN-containing protein TAH18. TAH18-DRE2 are also required for the assembly of the diferric tyrosyl radical cofactor of ribonucleotide reductase (RNR), probably by providing electrons for reduction during radical cofactor maturation in the catalytic small subunit RNR2.</text>
</comment>
<comment type="cofactor">
    <cofactor evidence="1">
        <name>[2Fe-2S] cluster</name>
        <dbReference type="ChEBI" id="CHEBI:190135"/>
    </cofactor>
</comment>
<comment type="cofactor">
    <cofactor evidence="1">
        <name>[4Fe-4S] cluster</name>
        <dbReference type="ChEBI" id="CHEBI:49883"/>
    </cofactor>
</comment>
<comment type="subunit">
    <text evidence="1">Monomer. Interacts with TAH18. Interacts with MIA40.</text>
</comment>
<comment type="subcellular location">
    <subcellularLocation>
        <location evidence="1">Cytoplasm</location>
    </subcellularLocation>
    <subcellularLocation>
        <location evidence="1">Mitochondrion intermembrane space</location>
    </subcellularLocation>
</comment>
<comment type="domain">
    <text evidence="1">The C-terminal domain binds 2 Fe-S clusters but is otherwise mostly in an intrinsically disordered conformation.</text>
</comment>
<comment type="domain">
    <text evidence="1">The N-terminal domain has structural similarity with S-adenosyl-L-methionine-dependent methyltransferases, but does not bind S-adenosyl-L-methionine. It is required for correct assembly of the 2 Fe-S clusters.</text>
</comment>
<comment type="domain">
    <text evidence="1">The twin Cx2C motifs are involved in the recognition by the mitochondrial MIA40-ERV1 disulfide relay system. The formation of 2 disulfide bonds in the Cx2C motifs through dithiol/disulfide exchange reactions effectively traps the protein in the mitochondrial intermembrane space.</text>
</comment>
<comment type="similarity">
    <text evidence="1">Belongs to the anamorsin family.</text>
</comment>
<evidence type="ECO:0000255" key="1">
    <source>
        <dbReference type="HAMAP-Rule" id="MF_03115"/>
    </source>
</evidence>
<evidence type="ECO:0000256" key="2">
    <source>
        <dbReference type="SAM" id="MobiDB-lite"/>
    </source>
</evidence>
<protein>
    <recommendedName>
        <fullName evidence="1">Fe-S cluster assembly protein DRE2</fullName>
    </recommendedName>
    <alternativeName>
        <fullName evidence="1">Anamorsin homolog</fullName>
    </alternativeName>
</protein>
<reference key="1">
    <citation type="journal article" date="2009" name="Genome Res.">
        <title>Comparative genomic analyses of the human fungal pathogens Coccidioides and their relatives.</title>
        <authorList>
            <person name="Sharpton T.J."/>
            <person name="Stajich J.E."/>
            <person name="Rounsley S.D."/>
            <person name="Gardner M.J."/>
            <person name="Wortman J.R."/>
            <person name="Jordar V.S."/>
            <person name="Maiti R."/>
            <person name="Kodira C.D."/>
            <person name="Neafsey D.E."/>
            <person name="Zeng Q."/>
            <person name="Hung C.-Y."/>
            <person name="McMahan C."/>
            <person name="Muszewska A."/>
            <person name="Grynberg M."/>
            <person name="Mandel M.A."/>
            <person name="Kellner E.M."/>
            <person name="Barker B.M."/>
            <person name="Galgiani J.N."/>
            <person name="Orbach M.J."/>
            <person name="Kirkland T.N."/>
            <person name="Cole G.T."/>
            <person name="Henn M.R."/>
            <person name="Birren B.W."/>
            <person name="Taylor J.W."/>
        </authorList>
    </citation>
    <scope>NUCLEOTIDE SEQUENCE [LARGE SCALE GENOMIC DNA]</scope>
    <source>
        <strain>NAm1 / WU24</strain>
    </source>
</reference>
<accession>A6QXB4</accession>